<dbReference type="EMBL" id="AY055762">
    <property type="protein sequence ID" value="AAL17724.1"/>
    <property type="molecule type" value="Genomic_RNA"/>
</dbReference>
<dbReference type="RefSeq" id="NP_932309.1">
    <property type="nucleotide sequence ID" value="NC_005132.1"/>
</dbReference>
<dbReference type="SMR" id="Q6YNQ5"/>
<dbReference type="KEGG" id="vg:2943230"/>
<dbReference type="Proteomes" id="UP000001664">
    <property type="component" value="Segment"/>
</dbReference>
<dbReference type="GO" id="GO:0019029">
    <property type="term" value="C:helical viral capsid"/>
    <property type="evidence" value="ECO:0007669"/>
    <property type="project" value="UniProtKB-KW"/>
</dbReference>
<dbReference type="GO" id="GO:0005198">
    <property type="term" value="F:structural molecule activity"/>
    <property type="evidence" value="ECO:0007669"/>
    <property type="project" value="InterPro"/>
</dbReference>
<dbReference type="InterPro" id="IPR000052">
    <property type="entry name" value="Pltvir_coat"/>
</dbReference>
<dbReference type="Pfam" id="PF00286">
    <property type="entry name" value="Flexi_CP"/>
    <property type="match status" value="1"/>
</dbReference>
<dbReference type="PRINTS" id="PR00232">
    <property type="entry name" value="POTXCARLCOAT"/>
</dbReference>
<dbReference type="PROSITE" id="PS00418">
    <property type="entry name" value="POTEX_CARLAVIRUS_COAT"/>
    <property type="match status" value="1"/>
</dbReference>
<proteinExistence type="inferred from homology"/>
<organismHost>
    <name type="scientific">Botryotinia fuckeliana</name>
    <name type="common">Noble rot fungus</name>
    <name type="synonym">Botrytis cinerea</name>
    <dbReference type="NCBI Taxonomy" id="40559"/>
</organismHost>
<gene>
    <name type="primary">ORF3</name>
</gene>
<evidence type="ECO:0000250" key="1"/>
<evidence type="ECO:0000256" key="2">
    <source>
        <dbReference type="SAM" id="MobiDB-lite"/>
    </source>
</evidence>
<evidence type="ECO:0000305" key="3"/>
<organism>
    <name type="scientific">Botrytis virus X (isolate Botrytis cinerea/New Zealand/Howitt/2006)</name>
    <name type="common">BOTV-X</name>
    <dbReference type="NCBI Taxonomy" id="686947"/>
    <lineage>
        <taxon>Viruses</taxon>
        <taxon>Riboviria</taxon>
        <taxon>Orthornavirae</taxon>
        <taxon>Kitrinoviricota</taxon>
        <taxon>Alsuviricetes</taxon>
        <taxon>Tymovirales</taxon>
        <taxon>Alphaflexiviridae</taxon>
        <taxon>Botrexvirus</taxon>
        <taxon>Botrytis virus X</taxon>
    </lineage>
</organism>
<reference key="1">
    <citation type="journal article" date="2006" name="Arch. Virol.">
        <title>Genome characterization of a flexuous rod-shaped mycovirus, Botrytis virus X, reveals high amino acid identity to genes from plant 'potex-like' viruses.</title>
        <authorList>
            <person name="Howitt R.L."/>
            <person name="Beever R.E."/>
            <person name="Pearson M.N."/>
            <person name="Forster R.L."/>
        </authorList>
    </citation>
    <scope>NUCLEOTIDE SEQUENCE [GENOMIC RNA]</scope>
</reference>
<protein>
    <recommendedName>
        <fullName>Capsid protein</fullName>
        <shortName>CP</shortName>
    </recommendedName>
</protein>
<name>CAPSD_BOTVX</name>
<keyword id="KW-0167">Capsid protein</keyword>
<keyword id="KW-1139">Helical capsid protein</keyword>
<keyword id="KW-1185">Reference proteome</keyword>
<keyword id="KW-0946">Virion</keyword>
<comment type="function">
    <text evidence="1">Required for genome encapsidation.</text>
</comment>
<comment type="subcellular location">
    <subcellularLocation>
        <location evidence="3">Virion</location>
    </subcellularLocation>
</comment>
<comment type="similarity">
    <text evidence="3">Belongs to the potexvirus capsid protein family.</text>
</comment>
<sequence length="400" mass="43503">MDPNLDQDTLPTHEEIDNDVDSAEEEPPEPPLLPDDIDDDDSHGSRTRRQVKPPPELLRAVGACLISGHYDGGNYFRWQQSIAALYAKAGYAGDIRFHQAAIQEYALDPVLPAPRVSYDLLVAHAGLRYQALLNEQLRTGKTPPADEALKDAVRKAAQAAYDNAVKTGDYTPLIDIAFKGVDINKHASDVAQLAKMSVTMDGTHIKFTAGEMPKDKVITSNSMASPNTVMNILNLITTSANVTAVTCGIEFAIACAHQGSSRYTRHTGTSTGGSTFELIAAHVKEHCTIRQFCSYFAKVVWNHLLTHATPPVNWAKHGFTLDSRYAAFDFFDAVTNAAALPPKNGLIRAPTSEEIRAHNLNAHLLINASRQDDQVSSSAQYTAAIAQAGGFKRPQIGWGE</sequence>
<accession>Q6YNQ5</accession>
<feature type="chain" id="PRO_0000401068" description="Capsid protein">
    <location>
        <begin position="1"/>
        <end position="400"/>
    </location>
</feature>
<feature type="region of interest" description="Disordered" evidence="2">
    <location>
        <begin position="1"/>
        <end position="54"/>
    </location>
</feature>
<feature type="compositionally biased region" description="Polar residues" evidence="2">
    <location>
        <begin position="1"/>
        <end position="10"/>
    </location>
</feature>
<feature type="compositionally biased region" description="Acidic residues" evidence="2">
    <location>
        <begin position="16"/>
        <end position="28"/>
    </location>
</feature>